<dbReference type="EC" id="6.3.2.8" evidence="1"/>
<dbReference type="EMBL" id="AP006627">
    <property type="protein sequence ID" value="BAD65302.1"/>
    <property type="molecule type" value="Genomic_DNA"/>
</dbReference>
<dbReference type="RefSeq" id="WP_011247610.1">
    <property type="nucleotide sequence ID" value="NC_006582.1"/>
</dbReference>
<dbReference type="SMR" id="Q5WEA8"/>
<dbReference type="STRING" id="66692.ABC2768"/>
<dbReference type="KEGG" id="bcl:ABC2768"/>
<dbReference type="eggNOG" id="COG0773">
    <property type="taxonomic scope" value="Bacteria"/>
</dbReference>
<dbReference type="HOGENOM" id="CLU_028104_1_0_9"/>
<dbReference type="OrthoDB" id="9804126at2"/>
<dbReference type="UniPathway" id="UPA00219"/>
<dbReference type="Proteomes" id="UP000001168">
    <property type="component" value="Chromosome"/>
</dbReference>
<dbReference type="GO" id="GO:0005737">
    <property type="term" value="C:cytoplasm"/>
    <property type="evidence" value="ECO:0007669"/>
    <property type="project" value="UniProtKB-SubCell"/>
</dbReference>
<dbReference type="GO" id="GO:0005524">
    <property type="term" value="F:ATP binding"/>
    <property type="evidence" value="ECO:0007669"/>
    <property type="project" value="UniProtKB-UniRule"/>
</dbReference>
<dbReference type="GO" id="GO:0008763">
    <property type="term" value="F:UDP-N-acetylmuramate-L-alanine ligase activity"/>
    <property type="evidence" value="ECO:0007669"/>
    <property type="project" value="UniProtKB-UniRule"/>
</dbReference>
<dbReference type="GO" id="GO:0051301">
    <property type="term" value="P:cell division"/>
    <property type="evidence" value="ECO:0007669"/>
    <property type="project" value="UniProtKB-KW"/>
</dbReference>
<dbReference type="GO" id="GO:0071555">
    <property type="term" value="P:cell wall organization"/>
    <property type="evidence" value="ECO:0007669"/>
    <property type="project" value="UniProtKB-KW"/>
</dbReference>
<dbReference type="GO" id="GO:0009252">
    <property type="term" value="P:peptidoglycan biosynthetic process"/>
    <property type="evidence" value="ECO:0007669"/>
    <property type="project" value="UniProtKB-UniRule"/>
</dbReference>
<dbReference type="GO" id="GO:0008360">
    <property type="term" value="P:regulation of cell shape"/>
    <property type="evidence" value="ECO:0007669"/>
    <property type="project" value="UniProtKB-KW"/>
</dbReference>
<dbReference type="Gene3D" id="3.90.190.20">
    <property type="entry name" value="Mur ligase, C-terminal domain"/>
    <property type="match status" value="1"/>
</dbReference>
<dbReference type="Gene3D" id="3.40.1190.10">
    <property type="entry name" value="Mur-like, catalytic domain"/>
    <property type="match status" value="1"/>
</dbReference>
<dbReference type="Gene3D" id="3.40.50.720">
    <property type="entry name" value="NAD(P)-binding Rossmann-like Domain"/>
    <property type="match status" value="1"/>
</dbReference>
<dbReference type="HAMAP" id="MF_00046">
    <property type="entry name" value="MurC"/>
    <property type="match status" value="1"/>
</dbReference>
<dbReference type="InterPro" id="IPR036565">
    <property type="entry name" value="Mur-like_cat_sf"/>
</dbReference>
<dbReference type="InterPro" id="IPR004101">
    <property type="entry name" value="Mur_ligase_C"/>
</dbReference>
<dbReference type="InterPro" id="IPR036615">
    <property type="entry name" value="Mur_ligase_C_dom_sf"/>
</dbReference>
<dbReference type="InterPro" id="IPR013221">
    <property type="entry name" value="Mur_ligase_cen"/>
</dbReference>
<dbReference type="InterPro" id="IPR000713">
    <property type="entry name" value="Mur_ligase_N"/>
</dbReference>
<dbReference type="InterPro" id="IPR050061">
    <property type="entry name" value="MurCDEF_pg_biosynth"/>
</dbReference>
<dbReference type="InterPro" id="IPR005758">
    <property type="entry name" value="UDP-N-AcMur_Ala_ligase_MurC"/>
</dbReference>
<dbReference type="NCBIfam" id="TIGR01082">
    <property type="entry name" value="murC"/>
    <property type="match status" value="1"/>
</dbReference>
<dbReference type="PANTHER" id="PTHR43445:SF3">
    <property type="entry name" value="UDP-N-ACETYLMURAMATE--L-ALANINE LIGASE"/>
    <property type="match status" value="1"/>
</dbReference>
<dbReference type="PANTHER" id="PTHR43445">
    <property type="entry name" value="UDP-N-ACETYLMURAMATE--L-ALANINE LIGASE-RELATED"/>
    <property type="match status" value="1"/>
</dbReference>
<dbReference type="Pfam" id="PF01225">
    <property type="entry name" value="Mur_ligase"/>
    <property type="match status" value="1"/>
</dbReference>
<dbReference type="Pfam" id="PF02875">
    <property type="entry name" value="Mur_ligase_C"/>
    <property type="match status" value="1"/>
</dbReference>
<dbReference type="Pfam" id="PF08245">
    <property type="entry name" value="Mur_ligase_M"/>
    <property type="match status" value="1"/>
</dbReference>
<dbReference type="SUPFAM" id="SSF51984">
    <property type="entry name" value="MurCD N-terminal domain"/>
    <property type="match status" value="1"/>
</dbReference>
<dbReference type="SUPFAM" id="SSF53623">
    <property type="entry name" value="MurD-like peptide ligases, catalytic domain"/>
    <property type="match status" value="1"/>
</dbReference>
<dbReference type="SUPFAM" id="SSF53244">
    <property type="entry name" value="MurD-like peptide ligases, peptide-binding domain"/>
    <property type="match status" value="1"/>
</dbReference>
<feature type="chain" id="PRO_0000182054" description="UDP-N-acetylmuramate--L-alanine ligase">
    <location>
        <begin position="1"/>
        <end position="435"/>
    </location>
</feature>
<feature type="binding site" evidence="1">
    <location>
        <begin position="108"/>
        <end position="114"/>
    </location>
    <ligand>
        <name>ATP</name>
        <dbReference type="ChEBI" id="CHEBI:30616"/>
    </ligand>
</feature>
<keyword id="KW-0067">ATP-binding</keyword>
<keyword id="KW-0131">Cell cycle</keyword>
<keyword id="KW-0132">Cell division</keyword>
<keyword id="KW-0133">Cell shape</keyword>
<keyword id="KW-0961">Cell wall biogenesis/degradation</keyword>
<keyword id="KW-0963">Cytoplasm</keyword>
<keyword id="KW-0436">Ligase</keyword>
<keyword id="KW-0547">Nucleotide-binding</keyword>
<keyword id="KW-0573">Peptidoglycan synthesis</keyword>
<keyword id="KW-1185">Reference proteome</keyword>
<comment type="function">
    <text evidence="1">Cell wall formation.</text>
</comment>
<comment type="catalytic activity">
    <reaction evidence="1">
        <text>UDP-N-acetyl-alpha-D-muramate + L-alanine + ATP = UDP-N-acetyl-alpha-D-muramoyl-L-alanine + ADP + phosphate + H(+)</text>
        <dbReference type="Rhea" id="RHEA:23372"/>
        <dbReference type="ChEBI" id="CHEBI:15378"/>
        <dbReference type="ChEBI" id="CHEBI:30616"/>
        <dbReference type="ChEBI" id="CHEBI:43474"/>
        <dbReference type="ChEBI" id="CHEBI:57972"/>
        <dbReference type="ChEBI" id="CHEBI:70757"/>
        <dbReference type="ChEBI" id="CHEBI:83898"/>
        <dbReference type="ChEBI" id="CHEBI:456216"/>
        <dbReference type="EC" id="6.3.2.8"/>
    </reaction>
</comment>
<comment type="pathway">
    <text evidence="1">Cell wall biogenesis; peptidoglycan biosynthesis.</text>
</comment>
<comment type="subcellular location">
    <subcellularLocation>
        <location evidence="1">Cytoplasm</location>
    </subcellularLocation>
</comment>
<comment type="similarity">
    <text evidence="1">Belongs to the MurCDEF family.</text>
</comment>
<gene>
    <name evidence="1" type="primary">murC</name>
    <name type="ordered locus">ABC2768</name>
</gene>
<proteinExistence type="inferred from homology"/>
<evidence type="ECO:0000255" key="1">
    <source>
        <dbReference type="HAMAP-Rule" id="MF_00046"/>
    </source>
</evidence>
<name>MURC_SHOC1</name>
<sequence>MTNYHFTGIKGSGMSALAQILHDLNENVQGSDIEETIFTQKPLERKGITLLPFSRDNIKNGQHVIVSAAYGETHEEIKRARELGLKVDVYPEFLGSFIKQFTSIAVSGSHGKTSTTGLLAHVLGSVEPTSYLIGDGTGKGAANSTYFVFEACEYRRHFLNYSPDYCVMTNIDFDHPDYFKSVEDVVSAFQTMAKQVNKAIIACGDDEHLQTLQANVPIVYYGLGDHNDFQAKSIKNTPEGTAFDAWVRGDLFGSFVIPGFGDHNVKNALSVIALCHYEGIGYEDIVEHLKTFAGVKRRFSEKRSGKQILIDDYAHHPTEIAATIEATKKKYHDREVTAIFQPHTFTRTKTFLNEFAEALSQADHVYLCDIFGSAREEQGSLSIEQLQALVDGAKLLTEAEIETLKGHGESVLLFMGAGDIQKYQKAYEALIESSS</sequence>
<reference key="1">
    <citation type="submission" date="2003-10" db="EMBL/GenBank/DDBJ databases">
        <title>The complete genome sequence of the alkaliphilic Bacillus clausii KSM-K16.</title>
        <authorList>
            <person name="Takaki Y."/>
            <person name="Kageyama Y."/>
            <person name="Shimamura S."/>
            <person name="Suzuki H."/>
            <person name="Nishi S."/>
            <person name="Hatada Y."/>
            <person name="Kawai S."/>
            <person name="Ito S."/>
            <person name="Horikoshi K."/>
        </authorList>
    </citation>
    <scope>NUCLEOTIDE SEQUENCE [LARGE SCALE GENOMIC DNA]</scope>
    <source>
        <strain>KSM-K16</strain>
    </source>
</reference>
<protein>
    <recommendedName>
        <fullName evidence="1">UDP-N-acetylmuramate--L-alanine ligase</fullName>
        <ecNumber evidence="1">6.3.2.8</ecNumber>
    </recommendedName>
    <alternativeName>
        <fullName evidence="1">UDP-N-acetylmuramoyl-L-alanine synthetase</fullName>
    </alternativeName>
</protein>
<organism>
    <name type="scientific">Shouchella clausii (strain KSM-K16)</name>
    <name type="common">Alkalihalobacillus clausii</name>
    <dbReference type="NCBI Taxonomy" id="66692"/>
    <lineage>
        <taxon>Bacteria</taxon>
        <taxon>Bacillati</taxon>
        <taxon>Bacillota</taxon>
        <taxon>Bacilli</taxon>
        <taxon>Bacillales</taxon>
        <taxon>Bacillaceae</taxon>
        <taxon>Shouchella</taxon>
    </lineage>
</organism>
<accession>Q5WEA8</accession>